<gene>
    <name type="primary">URA1</name>
</gene>
<protein>
    <recommendedName>
        <fullName>Dihydroorotate dehydrogenase (fumarate)</fullName>
        <shortName>DHOD</shortName>
        <shortName>DHODase</shortName>
        <shortName>DHOdehase</shortName>
        <ecNumber>1.3.98.1</ecNumber>
    </recommendedName>
    <alternativeName>
        <fullName>Dihydroorotate oxidase</fullName>
    </alternativeName>
</protein>
<evidence type="ECO:0000250" key="1"/>
<evidence type="ECO:0000305" key="2"/>
<sequence length="314" mass="34820">MTASLTTKFLNNTYENPFMNASGVHCMTTQELDELANSKAGAFITKSATTLEREGNPKPRYISVPLGSINSMGLPNEGIDYYLSYVLNRQKEHPDAPAIFFSVAGMSIDENLNLLRKIQDSEFNGITELNLSCPNVPGKPQVAYDFDLTKETLDRVFAFFKKPLGIKLPPYFDFAHFDIMAKILNEFPLAYVNSINSIGNGLFIDVEKESVVVKPKNGFGGIGGEYVKPTALANVRAFYTRLRPEIKVIGTGGIKSGKDAFEHLLCGASMLQIGTELQKEGVKIFERIEKELKDIMEAKGYTSIDQFRGMLNSI</sequence>
<feature type="chain" id="PRO_0000148505" description="Dihydroorotate dehydrogenase (fumarate)">
    <location>
        <begin position="1"/>
        <end position="314"/>
    </location>
</feature>
<feature type="active site" description="Nucleophile" evidence="1">
    <location>
        <position position="132"/>
    </location>
</feature>
<feature type="active site" description="Nucleophile" evidence="1">
    <location>
        <position position="133"/>
    </location>
</feature>
<feature type="binding site" evidence="1">
    <location>
        <begin position="46"/>
        <end position="47"/>
    </location>
    <ligand>
        <name>FMN</name>
        <dbReference type="ChEBI" id="CHEBI:58210"/>
    </ligand>
</feature>
<feature type="binding site" evidence="1">
    <location>
        <position position="46"/>
    </location>
    <ligand>
        <name>substrate</name>
    </ligand>
</feature>
<feature type="binding site" evidence="1">
    <location>
        <begin position="70"/>
        <end position="74"/>
    </location>
    <ligand>
        <name>substrate</name>
    </ligand>
</feature>
<feature type="binding site" evidence="1">
    <location>
        <position position="130"/>
    </location>
    <ligand>
        <name>FMN</name>
        <dbReference type="ChEBI" id="CHEBI:58210"/>
    </ligand>
</feature>
<feature type="binding site" evidence="1">
    <location>
        <position position="130"/>
    </location>
    <ligand>
        <name>substrate</name>
    </ligand>
</feature>
<feature type="binding site" evidence="1">
    <location>
        <position position="167"/>
    </location>
    <ligand>
        <name>FMN</name>
        <dbReference type="ChEBI" id="CHEBI:58210"/>
    </ligand>
</feature>
<feature type="binding site" evidence="1">
    <location>
        <position position="195"/>
    </location>
    <ligand>
        <name>FMN</name>
        <dbReference type="ChEBI" id="CHEBI:58210"/>
    </ligand>
</feature>
<feature type="binding site" evidence="1">
    <location>
        <begin position="196"/>
        <end position="197"/>
    </location>
    <ligand>
        <name>substrate</name>
    </ligand>
</feature>
<feature type="binding site" evidence="1">
    <location>
        <position position="224"/>
    </location>
    <ligand>
        <name>FMN</name>
        <dbReference type="ChEBI" id="CHEBI:58210"/>
    </ligand>
</feature>
<feature type="binding site" evidence="1">
    <location>
        <begin position="252"/>
        <end position="253"/>
    </location>
    <ligand>
        <name>FMN</name>
        <dbReference type="ChEBI" id="CHEBI:58210"/>
    </ligand>
</feature>
<feature type="binding site" evidence="1">
    <location>
        <begin position="274"/>
        <end position="275"/>
    </location>
    <ligand>
        <name>FMN</name>
        <dbReference type="ChEBI" id="CHEBI:58210"/>
    </ligand>
</feature>
<reference key="1">
    <citation type="journal article" date="2005" name="Eukaryot. Cell">
        <title>Contribution of horizontal gene transfer to the evolution of Saccharomyces cerevisiae.</title>
        <authorList>
            <person name="Hall C.R."/>
            <person name="Brachat S."/>
            <person name="Dietrich F.S."/>
        </authorList>
    </citation>
    <scope>NUCLEOTIDE SEQUENCE [GENOMIC DNA]</scope>
    <source>
        <strain>YJM 498</strain>
    </source>
</reference>
<dbReference type="EC" id="1.3.98.1"/>
<dbReference type="EMBL" id="AY323903">
    <property type="protein sequence ID" value="AAQ01780.1"/>
    <property type="molecule type" value="Genomic_DNA"/>
</dbReference>
<dbReference type="SMR" id="Q7Z891"/>
<dbReference type="VEuPathDB" id="FungiDB:SPAR_K00080"/>
<dbReference type="UniPathway" id="UPA00070"/>
<dbReference type="GO" id="GO:0005737">
    <property type="term" value="C:cytoplasm"/>
    <property type="evidence" value="ECO:0007669"/>
    <property type="project" value="UniProtKB-SubCell"/>
</dbReference>
<dbReference type="GO" id="GO:1990663">
    <property type="term" value="F:dihydroorotate dehydrogenase (fumarate) activity"/>
    <property type="evidence" value="ECO:0007669"/>
    <property type="project" value="UniProtKB-EC"/>
</dbReference>
<dbReference type="GO" id="GO:0006207">
    <property type="term" value="P:'de novo' pyrimidine nucleobase biosynthetic process"/>
    <property type="evidence" value="ECO:0007669"/>
    <property type="project" value="InterPro"/>
</dbReference>
<dbReference type="GO" id="GO:0044205">
    <property type="term" value="P:'de novo' UMP biosynthetic process"/>
    <property type="evidence" value="ECO:0007669"/>
    <property type="project" value="UniProtKB-UniPathway"/>
</dbReference>
<dbReference type="CDD" id="cd04741">
    <property type="entry name" value="DHOD_1A_like"/>
    <property type="match status" value="1"/>
</dbReference>
<dbReference type="FunFam" id="3.20.20.70:FF:000027">
    <property type="entry name" value="Dihydropyrimidine dehydrogenase [NADP(+)]"/>
    <property type="match status" value="1"/>
</dbReference>
<dbReference type="Gene3D" id="3.20.20.70">
    <property type="entry name" value="Aldolase class I"/>
    <property type="match status" value="1"/>
</dbReference>
<dbReference type="Gene3D" id="2.30.26.10">
    <property type="entry name" value="Dihydroorotate Dehydrogenase A, chain A, domain 2"/>
    <property type="match status" value="1"/>
</dbReference>
<dbReference type="HAMAP" id="MF_00224">
    <property type="entry name" value="DHO_dh_type1"/>
    <property type="match status" value="1"/>
</dbReference>
<dbReference type="InterPro" id="IPR013785">
    <property type="entry name" value="Aldolase_TIM"/>
</dbReference>
<dbReference type="InterPro" id="IPR050074">
    <property type="entry name" value="DHO_dehydrogenase"/>
</dbReference>
<dbReference type="InterPro" id="IPR033886">
    <property type="entry name" value="DHOD_1A"/>
</dbReference>
<dbReference type="InterPro" id="IPR023359">
    <property type="entry name" value="Dihydro_DH_chainA_dom2"/>
</dbReference>
<dbReference type="InterPro" id="IPR024920">
    <property type="entry name" value="Dihydroorotate_DH_1"/>
</dbReference>
<dbReference type="InterPro" id="IPR012135">
    <property type="entry name" value="Dihydroorotate_DH_1_2"/>
</dbReference>
<dbReference type="InterPro" id="IPR005720">
    <property type="entry name" value="Dihydroorotate_DH_cat"/>
</dbReference>
<dbReference type="InterPro" id="IPR001295">
    <property type="entry name" value="Dihydroorotate_DH_CS"/>
</dbReference>
<dbReference type="NCBIfam" id="NF002702">
    <property type="entry name" value="PRK02506.1"/>
    <property type="match status" value="1"/>
</dbReference>
<dbReference type="PANTHER" id="PTHR48109:SF1">
    <property type="entry name" value="DIHYDROOROTATE DEHYDROGENASE (FUMARATE)"/>
    <property type="match status" value="1"/>
</dbReference>
<dbReference type="PANTHER" id="PTHR48109">
    <property type="entry name" value="DIHYDROOROTATE DEHYDROGENASE (QUINONE), MITOCHONDRIAL-RELATED"/>
    <property type="match status" value="1"/>
</dbReference>
<dbReference type="Pfam" id="PF01180">
    <property type="entry name" value="DHO_dh"/>
    <property type="match status" value="1"/>
</dbReference>
<dbReference type="PIRSF" id="PIRSF000164">
    <property type="entry name" value="DHO_oxidase"/>
    <property type="match status" value="1"/>
</dbReference>
<dbReference type="SUPFAM" id="SSF51395">
    <property type="entry name" value="FMN-linked oxidoreductases"/>
    <property type="match status" value="1"/>
</dbReference>
<dbReference type="PROSITE" id="PS00911">
    <property type="entry name" value="DHODEHASE_1"/>
    <property type="match status" value="1"/>
</dbReference>
<dbReference type="PROSITE" id="PS00912">
    <property type="entry name" value="DHODEHASE_2"/>
    <property type="match status" value="1"/>
</dbReference>
<comment type="function">
    <text evidence="1">Catalyzes the conversion of dihydroorotate to orotate with fumarate as the electron acceptor.</text>
</comment>
<comment type="catalytic activity">
    <reaction>
        <text>(S)-dihydroorotate + fumarate = orotate + succinate</text>
        <dbReference type="Rhea" id="RHEA:30059"/>
        <dbReference type="ChEBI" id="CHEBI:29806"/>
        <dbReference type="ChEBI" id="CHEBI:30031"/>
        <dbReference type="ChEBI" id="CHEBI:30839"/>
        <dbReference type="ChEBI" id="CHEBI:30864"/>
        <dbReference type="EC" id="1.3.98.1"/>
    </reaction>
</comment>
<comment type="cofactor">
    <cofactor evidence="1">
        <name>FMN</name>
        <dbReference type="ChEBI" id="CHEBI:58210"/>
    </cofactor>
    <text evidence="1">Binds 1 FMN per subunit.</text>
</comment>
<comment type="pathway">
    <text>Pyrimidine metabolism; UMP biosynthesis via de novo pathway.</text>
</comment>
<comment type="subunit">
    <text evidence="1">Homodimer.</text>
</comment>
<comment type="subcellular location">
    <subcellularLocation>
        <location evidence="1">Cytoplasm</location>
    </subcellularLocation>
</comment>
<comment type="similarity">
    <text evidence="2">Belongs to the dihydroorotate dehydrogenase family. Type 1 subfamily.</text>
</comment>
<keyword id="KW-0963">Cytoplasm</keyword>
<keyword id="KW-0285">Flavoprotein</keyword>
<keyword id="KW-0288">FMN</keyword>
<keyword id="KW-0560">Oxidoreductase</keyword>
<keyword id="KW-0665">Pyrimidine biosynthesis</keyword>
<accession>Q7Z891</accession>
<name>PYRD_SACPA</name>
<proteinExistence type="inferred from homology"/>
<organism>
    <name type="scientific">Saccharomyces paradoxus</name>
    <name type="common">Yeast</name>
    <name type="synonym">Saccharomyces douglasii</name>
    <dbReference type="NCBI Taxonomy" id="27291"/>
    <lineage>
        <taxon>Eukaryota</taxon>
        <taxon>Fungi</taxon>
        <taxon>Dikarya</taxon>
        <taxon>Ascomycota</taxon>
        <taxon>Saccharomycotina</taxon>
        <taxon>Saccharomycetes</taxon>
        <taxon>Saccharomycetales</taxon>
        <taxon>Saccharomycetaceae</taxon>
        <taxon>Saccharomyces</taxon>
    </lineage>
</organism>